<organism>
    <name type="scientific">Medicago truncatula</name>
    <name type="common">Barrel medic</name>
    <name type="synonym">Medicago tribuloides</name>
    <dbReference type="NCBI Taxonomy" id="3880"/>
    <lineage>
        <taxon>Eukaryota</taxon>
        <taxon>Viridiplantae</taxon>
        <taxon>Streptophyta</taxon>
        <taxon>Embryophyta</taxon>
        <taxon>Tracheophyta</taxon>
        <taxon>Spermatophyta</taxon>
        <taxon>Magnoliopsida</taxon>
        <taxon>eudicotyledons</taxon>
        <taxon>Gunneridae</taxon>
        <taxon>Pentapetalae</taxon>
        <taxon>rosids</taxon>
        <taxon>fabids</taxon>
        <taxon>Fabales</taxon>
        <taxon>Fabaceae</taxon>
        <taxon>Papilionoideae</taxon>
        <taxon>50 kb inversion clade</taxon>
        <taxon>NPAAA clade</taxon>
        <taxon>Hologalegina</taxon>
        <taxon>IRL clade</taxon>
        <taxon>Trifolieae</taxon>
        <taxon>Medicago</taxon>
    </lineage>
</organism>
<protein>
    <recommendedName>
        <fullName>Auxin transporter-like protein 3</fullName>
    </recommendedName>
    <alternativeName>
        <fullName>AUX1-like protein 3</fullName>
    </alternativeName>
    <alternativeName>
        <fullName>MtLAX3</fullName>
    </alternativeName>
</protein>
<evidence type="ECO:0000250" key="1"/>
<evidence type="ECO:0000255" key="2"/>
<evidence type="ECO:0000269" key="3">
    <source>
    </source>
</evidence>
<evidence type="ECO:0000269" key="4">
    <source>
    </source>
</evidence>
<evidence type="ECO:0000305" key="5"/>
<feature type="chain" id="PRO_0000093847" description="Auxin transporter-like protein 3">
    <location>
        <begin position="1"/>
        <end position="465"/>
    </location>
</feature>
<feature type="topological domain" description="Cytoplasmic" evidence="2">
    <location>
        <begin position="1"/>
        <end position="52"/>
    </location>
</feature>
<feature type="transmembrane region" description="Helical" evidence="2">
    <location>
        <begin position="53"/>
        <end position="70"/>
    </location>
</feature>
<feature type="topological domain" description="Extracellular" evidence="2">
    <location>
        <begin position="71"/>
        <end position="72"/>
    </location>
</feature>
<feature type="transmembrane region" description="Helical" evidence="2">
    <location>
        <begin position="73"/>
        <end position="93"/>
    </location>
</feature>
<feature type="topological domain" description="Cytoplasmic" evidence="2">
    <location>
        <begin position="94"/>
        <end position="129"/>
    </location>
</feature>
<feature type="transmembrane region" description="Helical" evidence="2">
    <location>
        <begin position="130"/>
        <end position="150"/>
    </location>
</feature>
<feature type="topological domain" description="Extracellular" evidence="2">
    <location>
        <begin position="151"/>
        <end position="165"/>
    </location>
</feature>
<feature type="transmembrane region" description="Helical" evidence="2">
    <location>
        <begin position="166"/>
        <end position="186"/>
    </location>
</feature>
<feature type="topological domain" description="Cytoplasmic" evidence="2">
    <location>
        <begin position="187"/>
        <end position="189"/>
    </location>
</feature>
<feature type="transmembrane region" description="Helical" evidence="2">
    <location>
        <begin position="190"/>
        <end position="210"/>
    </location>
</feature>
<feature type="topological domain" description="Extracellular" evidence="2">
    <location>
        <begin position="211"/>
        <end position="225"/>
    </location>
</feature>
<feature type="transmembrane region" description="Helical" evidence="2">
    <location>
        <begin position="226"/>
        <end position="246"/>
    </location>
</feature>
<feature type="topological domain" description="Cytoplasmic" evidence="2">
    <location>
        <begin position="247"/>
        <end position="259"/>
    </location>
</feature>
<feature type="transmembrane region" description="Helical" evidence="2">
    <location>
        <begin position="260"/>
        <end position="280"/>
    </location>
</feature>
<feature type="topological domain" description="Extracellular" evidence="2">
    <location>
        <begin position="281"/>
        <end position="307"/>
    </location>
</feature>
<feature type="transmembrane region" description="Helical" evidence="2">
    <location>
        <begin position="308"/>
        <end position="328"/>
    </location>
</feature>
<feature type="topological domain" description="Cytoplasmic" evidence="2">
    <location>
        <begin position="329"/>
        <end position="349"/>
    </location>
</feature>
<feature type="transmembrane region" description="Helical" evidence="2">
    <location>
        <begin position="350"/>
        <end position="370"/>
    </location>
</feature>
<feature type="topological domain" description="Extracellular" evidence="2">
    <location>
        <begin position="371"/>
        <end position="374"/>
    </location>
</feature>
<feature type="transmembrane region" description="Helical" evidence="2">
    <location>
        <begin position="375"/>
        <end position="395"/>
    </location>
</feature>
<feature type="topological domain" description="Cytoplasmic" evidence="2">
    <location>
        <begin position="396"/>
        <end position="421"/>
    </location>
</feature>
<feature type="transmembrane region" description="Helical" evidence="2">
    <location>
        <begin position="422"/>
        <end position="442"/>
    </location>
</feature>
<feature type="topological domain" description="Extracellular" evidence="2">
    <location>
        <begin position="443"/>
        <end position="465"/>
    </location>
</feature>
<sequence>MTSEKVETVVAGNYLEMEREEEGSKSTTGKLSKFFWHGGSVYDAWFSCASNQVAQVLLTLPYSFSQLGMLSGILFQIFYGLMGSWTAYIISVLYVEYRTRKEREKVDFRNHVIQWFEVLDGLLGKHWRNLGLFFNCTFLLFGSVIQLIACASNIYYINDHLDKRTWTYIFGACCATTVFIPSFHNYRIWSFLGLVMTTYTAWYMTIASILHGQAEDVKHSGPTKLVLYFTGATNILYTFGGHAVTVEIMHAMWKPQKFKMIYLIATLYVMTLTLPSAAAVYWAFGDNLLTHSNALSLLPRTGFRDTAVILMLIHQFITFGFACTPLYFVWEKFLGVHETKSLLKRALVRLPVVIPIWFLAIIFPFFGPINSTVGSLLVSFTVYIIPALAHMVTFASAPARENAVERPPSFLGGWVGLYSVNVFVAVWVLVVGFGLGGWASMLNFVHQIKTFGLFAKCFQCPPHKA</sequence>
<gene>
    <name type="primary">LAX3</name>
</gene>
<proteinExistence type="evidence at transcript level"/>
<dbReference type="EMBL" id="AJ299399">
    <property type="protein sequence ID" value="CAC12997.1"/>
    <property type="molecule type" value="mRNA"/>
</dbReference>
<dbReference type="EMBL" id="AY115842">
    <property type="protein sequence ID" value="AAM55303.1"/>
    <property type="molecule type" value="Genomic_DNA"/>
</dbReference>
<dbReference type="SMR" id="Q9FEL6"/>
<dbReference type="PaxDb" id="3880-AES71337"/>
<dbReference type="GeneID" id="11411395"/>
<dbReference type="KEGG" id="mtr:11411395"/>
<dbReference type="eggNOG" id="KOG1303">
    <property type="taxonomic scope" value="Eukaryota"/>
</dbReference>
<dbReference type="HOGENOM" id="CLU_027994_2_0_1"/>
<dbReference type="OMA" id="IRVHETK"/>
<dbReference type="OrthoDB" id="40134at2759"/>
<dbReference type="ExpressionAtlas" id="Q9FEL6">
    <property type="expression patterns" value="differential"/>
</dbReference>
<dbReference type="GO" id="GO:0005886">
    <property type="term" value="C:plasma membrane"/>
    <property type="evidence" value="ECO:0007669"/>
    <property type="project" value="UniProtKB-SubCell"/>
</dbReference>
<dbReference type="GO" id="GO:0015293">
    <property type="term" value="F:symporter activity"/>
    <property type="evidence" value="ECO:0007669"/>
    <property type="project" value="UniProtKB-KW"/>
</dbReference>
<dbReference type="GO" id="GO:0006865">
    <property type="term" value="P:amino acid transport"/>
    <property type="evidence" value="ECO:0007669"/>
    <property type="project" value="UniProtKB-KW"/>
</dbReference>
<dbReference type="GO" id="GO:0009734">
    <property type="term" value="P:auxin-activated signaling pathway"/>
    <property type="evidence" value="ECO:0007669"/>
    <property type="project" value="UniProtKB-KW"/>
</dbReference>
<dbReference type="InterPro" id="IPR013057">
    <property type="entry name" value="AA_transpt_TM"/>
</dbReference>
<dbReference type="PANTHER" id="PTHR48017">
    <property type="entry name" value="OS05G0424000 PROTEIN-RELATED"/>
    <property type="match status" value="1"/>
</dbReference>
<dbReference type="Pfam" id="PF01490">
    <property type="entry name" value="Aa_trans"/>
    <property type="match status" value="1"/>
</dbReference>
<comment type="function">
    <text evidence="1 3">Carrier protein involved in proton-driven auxin influx. Mediates the formation of auxin gradient from developing leaves (site of auxin biosynthesis) to tips by contributing to the loading of auxin in vascular tissues and facilitating acropetal (base to tip) auxin transport within inner tissues of the root apex, and basipetal (tip to base) auxin transport within outer tissues of the root apex (By similarity). May be involved in lateral roots and nodules formation.</text>
</comment>
<comment type="subcellular location">
    <subcellularLocation>
        <location evidence="1">Cell membrane</location>
        <topology evidence="1">Multi-pass membrane protein</topology>
    </subcellularLocation>
</comment>
<comment type="tissue specificity">
    <text evidence="3 4">Shoots and roots of nodulating plants. Low levels in roots, nodules, stems, petioles, leaves, shoot apices and flowers.</text>
</comment>
<comment type="developmental stage">
    <text evidence="3">In primary roots, mostly localized in tips and to a lower extent in vasculature of older regions. In root tips, mostly expressed in the central tissues of the elongating zone (developing vasculature), in the starch-filled cells of the root cap and in some cortical cells. During lateral root development, striking expression in the proximal region of the primordium, close to the primary root central cylinder, and then in elongating cells of the developing vasculature and in developing root cap. During nodule formation, expressed in young elongated primordium, mostly in cells close to the root vasculature. In later stages, confined in small cells rich in amyloplasts with small nuclei. Near the periphery of developing nodules strong expression at the base that tapers off toward the apex. Not expressed in mature nodules.</text>
</comment>
<comment type="similarity">
    <text evidence="5">Belongs to the amino acid/polyamine transporter 2 family. Amino acid/auxin permease (AAAP) (TC 2.A.18.1) subfamily.</text>
</comment>
<comment type="caution">
    <text evidence="5">Because of the similarity in sequence, the probe used to describe the developmental stages did not discriminate among the various MtLAX mRNAs.</text>
</comment>
<reference key="1">
    <citation type="journal article" date="2001" name="Mol. Plant Microbe Interact.">
        <title>Expression studies on AUX1-like genes in Medicago truncatula suggest that auxin is required at two steps in early nodule development.</title>
        <authorList>
            <person name="de Billy F."/>
            <person name="Grosjean C."/>
            <person name="May S."/>
            <person name="Bennett M.J."/>
            <person name="Cullimore J.V."/>
        </authorList>
    </citation>
    <scope>NUCLEOTIDE SEQUENCE [MRNA]</scope>
    <scope>FUNCTION</scope>
    <scope>TISSUE SPECIFICITY</scope>
    <scope>DEVELOPMENTAL STAGE</scope>
    <source>
        <strain>cv. Jemalong</strain>
        <tissue>Root</tissue>
    </source>
</reference>
<reference key="2">
    <citation type="journal article" date="2004" name="Mol. Genet. Genomics">
        <title>The PIN and LAX families of auxin transport genes in Medicago truncatula.</title>
        <authorList>
            <person name="Schnabel E.L."/>
            <person name="Frugoli J."/>
        </authorList>
    </citation>
    <scope>NUCLEOTIDE SEQUENCE [GENOMIC DNA]</scope>
    <scope>GENE FAMILY</scope>
    <scope>TISSUE SPECIFICITY</scope>
</reference>
<accession>Q9FEL6</accession>
<name>LAX3_MEDTR</name>
<keyword id="KW-0029">Amino-acid transport</keyword>
<keyword id="KW-0927">Auxin signaling pathway</keyword>
<keyword id="KW-1003">Cell membrane</keyword>
<keyword id="KW-0472">Membrane</keyword>
<keyword id="KW-0769">Symport</keyword>
<keyword id="KW-0812">Transmembrane</keyword>
<keyword id="KW-1133">Transmembrane helix</keyword>
<keyword id="KW-0813">Transport</keyword>